<accession>A0KSN0</accession>
<sequence>MLTDMDISRRAHLKDIAALGAEFGLLPDEMQLFGKTKAKVDLRAQQRLAEQQQGKLIIVTAVTPTPHGEGKTVTTIGLTQSLKALGNKVCACIRQPSMGPVFGVKGGAAGGGYAQVVPMQELNLHLTGDIHAVSSAHNLGAAAIASRLYHETRLGKAEFESQSGQNYLDIAPNGIRWHRVVDHNDRCLREIEVGLGENNGPAYTSGFDITAASELMAILALSRNLADMRARIGKLVLAVNRQGAAISAEDLGVAGAMTAIMADAVKPTLMQTLNGAPCLIHAGPFANIAHGNSSVIADDIALKLADFVVTEGGFGSDMGFEKFCNIKARQSGLAPSAAVLVTTLKALKANSGLTSDADINAPDQARLEAGFANLNWHINNVARYGIPVVVAINRFATDTDAELNWLIEAVAGTAAFGCELSEAFSQGEAGALTLAQTVMRACEQPSEFTLLYPDEMALEAKLSTLAEVGYGATGVSLSEAAKLQLQELSALGYADLPVCMAKTPLSISHDPQLKGVPQGFIVPVRELVLNAGAGFITALVGNVMTMPGLGLVPGYLKVDIGADGEITGLG</sequence>
<comment type="catalytic activity">
    <reaction evidence="1">
        <text>(6S)-5,6,7,8-tetrahydrofolate + formate + ATP = (6R)-10-formyltetrahydrofolate + ADP + phosphate</text>
        <dbReference type="Rhea" id="RHEA:20221"/>
        <dbReference type="ChEBI" id="CHEBI:15740"/>
        <dbReference type="ChEBI" id="CHEBI:30616"/>
        <dbReference type="ChEBI" id="CHEBI:43474"/>
        <dbReference type="ChEBI" id="CHEBI:57453"/>
        <dbReference type="ChEBI" id="CHEBI:195366"/>
        <dbReference type="ChEBI" id="CHEBI:456216"/>
        <dbReference type="EC" id="6.3.4.3"/>
    </reaction>
</comment>
<comment type="pathway">
    <text evidence="1">One-carbon metabolism; tetrahydrofolate interconversion.</text>
</comment>
<comment type="similarity">
    <text evidence="1">Belongs to the formate--tetrahydrofolate ligase family.</text>
</comment>
<protein>
    <recommendedName>
        <fullName evidence="1">Formate--tetrahydrofolate ligase</fullName>
        <ecNumber evidence="1">6.3.4.3</ecNumber>
    </recommendedName>
    <alternativeName>
        <fullName evidence="1">Formyltetrahydrofolate synthetase</fullName>
        <shortName evidence="1">FHS</shortName>
        <shortName evidence="1">FTHFS</shortName>
    </alternativeName>
</protein>
<organism>
    <name type="scientific">Shewanella sp. (strain ANA-3)</name>
    <dbReference type="NCBI Taxonomy" id="94122"/>
    <lineage>
        <taxon>Bacteria</taxon>
        <taxon>Pseudomonadati</taxon>
        <taxon>Pseudomonadota</taxon>
        <taxon>Gammaproteobacteria</taxon>
        <taxon>Alteromonadales</taxon>
        <taxon>Shewanellaceae</taxon>
        <taxon>Shewanella</taxon>
    </lineage>
</organism>
<proteinExistence type="inferred from homology"/>
<reference key="1">
    <citation type="submission" date="2006-09" db="EMBL/GenBank/DDBJ databases">
        <title>Complete sequence of chromosome 1 of Shewanella sp. ANA-3.</title>
        <authorList>
            <person name="Copeland A."/>
            <person name="Lucas S."/>
            <person name="Lapidus A."/>
            <person name="Barry K."/>
            <person name="Detter J.C."/>
            <person name="Glavina del Rio T."/>
            <person name="Hammon N."/>
            <person name="Israni S."/>
            <person name="Dalin E."/>
            <person name="Tice H."/>
            <person name="Pitluck S."/>
            <person name="Chertkov O."/>
            <person name="Brettin T."/>
            <person name="Bruce D."/>
            <person name="Han C."/>
            <person name="Tapia R."/>
            <person name="Gilna P."/>
            <person name="Schmutz J."/>
            <person name="Larimer F."/>
            <person name="Land M."/>
            <person name="Hauser L."/>
            <person name="Kyrpides N."/>
            <person name="Kim E."/>
            <person name="Newman D."/>
            <person name="Salticov C."/>
            <person name="Konstantinidis K."/>
            <person name="Klappenback J."/>
            <person name="Tiedje J."/>
            <person name="Richardson P."/>
        </authorList>
    </citation>
    <scope>NUCLEOTIDE SEQUENCE [LARGE SCALE GENOMIC DNA]</scope>
    <source>
        <strain>ANA-3</strain>
    </source>
</reference>
<name>FTHS_SHESA</name>
<keyword id="KW-0067">ATP-binding</keyword>
<keyword id="KW-0436">Ligase</keyword>
<keyword id="KW-0547">Nucleotide-binding</keyword>
<keyword id="KW-0554">One-carbon metabolism</keyword>
<dbReference type="EC" id="6.3.4.3" evidence="1"/>
<dbReference type="EMBL" id="CP000469">
    <property type="protein sequence ID" value="ABK46799.1"/>
    <property type="molecule type" value="Genomic_DNA"/>
</dbReference>
<dbReference type="RefSeq" id="WP_011715760.1">
    <property type="nucleotide sequence ID" value="NC_008577.1"/>
</dbReference>
<dbReference type="SMR" id="A0KSN0"/>
<dbReference type="STRING" id="94122.Shewana3_0560"/>
<dbReference type="KEGG" id="shn:Shewana3_0560"/>
<dbReference type="eggNOG" id="COG2759">
    <property type="taxonomic scope" value="Bacteria"/>
</dbReference>
<dbReference type="HOGENOM" id="CLU_003601_3_3_6"/>
<dbReference type="OrthoDB" id="9761733at2"/>
<dbReference type="UniPathway" id="UPA00193"/>
<dbReference type="Proteomes" id="UP000002589">
    <property type="component" value="Chromosome"/>
</dbReference>
<dbReference type="GO" id="GO:0005524">
    <property type="term" value="F:ATP binding"/>
    <property type="evidence" value="ECO:0007669"/>
    <property type="project" value="UniProtKB-UniRule"/>
</dbReference>
<dbReference type="GO" id="GO:0004329">
    <property type="term" value="F:formate-tetrahydrofolate ligase activity"/>
    <property type="evidence" value="ECO:0007669"/>
    <property type="project" value="UniProtKB-UniRule"/>
</dbReference>
<dbReference type="GO" id="GO:0035999">
    <property type="term" value="P:tetrahydrofolate interconversion"/>
    <property type="evidence" value="ECO:0007669"/>
    <property type="project" value="UniProtKB-UniRule"/>
</dbReference>
<dbReference type="FunFam" id="3.10.410.10:FF:000001">
    <property type="entry name" value="Putative formate--tetrahydrofolate ligase"/>
    <property type="match status" value="1"/>
</dbReference>
<dbReference type="Gene3D" id="3.30.1510.10">
    <property type="entry name" value="Domain 2, N(10)-formyltetrahydrofolate synthetase"/>
    <property type="match status" value="1"/>
</dbReference>
<dbReference type="Gene3D" id="3.10.410.10">
    <property type="entry name" value="Formyltetrahydrofolate synthetase, domain 3"/>
    <property type="match status" value="1"/>
</dbReference>
<dbReference type="Gene3D" id="3.40.50.300">
    <property type="entry name" value="P-loop containing nucleotide triphosphate hydrolases"/>
    <property type="match status" value="1"/>
</dbReference>
<dbReference type="HAMAP" id="MF_01543">
    <property type="entry name" value="FTHFS"/>
    <property type="match status" value="1"/>
</dbReference>
<dbReference type="InterPro" id="IPR000559">
    <property type="entry name" value="Formate_THF_ligase"/>
</dbReference>
<dbReference type="InterPro" id="IPR020628">
    <property type="entry name" value="Formate_THF_ligase_CS"/>
</dbReference>
<dbReference type="InterPro" id="IPR027417">
    <property type="entry name" value="P-loop_NTPase"/>
</dbReference>
<dbReference type="NCBIfam" id="NF010030">
    <property type="entry name" value="PRK13505.1"/>
    <property type="match status" value="1"/>
</dbReference>
<dbReference type="NCBIfam" id="NF010031">
    <property type="entry name" value="PRK13506.1"/>
    <property type="match status" value="1"/>
</dbReference>
<dbReference type="Pfam" id="PF01268">
    <property type="entry name" value="FTHFS"/>
    <property type="match status" value="1"/>
</dbReference>
<dbReference type="SUPFAM" id="SSF52540">
    <property type="entry name" value="P-loop containing nucleoside triphosphate hydrolases"/>
    <property type="match status" value="1"/>
</dbReference>
<dbReference type="PROSITE" id="PS00721">
    <property type="entry name" value="FTHFS_1"/>
    <property type="match status" value="1"/>
</dbReference>
<feature type="chain" id="PRO_0000300538" description="Formate--tetrahydrofolate ligase">
    <location>
        <begin position="1"/>
        <end position="570"/>
    </location>
</feature>
<feature type="binding site" evidence="1">
    <location>
        <begin position="65"/>
        <end position="72"/>
    </location>
    <ligand>
        <name>ATP</name>
        <dbReference type="ChEBI" id="CHEBI:30616"/>
    </ligand>
</feature>
<gene>
    <name evidence="1" type="primary">fhs</name>
    <name type="ordered locus">Shewana3_0560</name>
</gene>
<evidence type="ECO:0000255" key="1">
    <source>
        <dbReference type="HAMAP-Rule" id="MF_01543"/>
    </source>
</evidence>